<accession>B2GCB7</accession>
<name>LEUD_LIMF3</name>
<gene>
    <name evidence="1" type="primary">leuD</name>
    <name type="ordered locus">LAF_0963</name>
</gene>
<feature type="chain" id="PRO_1000135813" description="3-isopropylmalate dehydratase small subunit">
    <location>
        <begin position="1"/>
        <end position="194"/>
    </location>
</feature>
<organism>
    <name type="scientific">Limosilactobacillus fermentum (strain NBRC 3956 / LMG 18251)</name>
    <name type="common">Lactobacillus fermentum</name>
    <dbReference type="NCBI Taxonomy" id="334390"/>
    <lineage>
        <taxon>Bacteria</taxon>
        <taxon>Bacillati</taxon>
        <taxon>Bacillota</taxon>
        <taxon>Bacilli</taxon>
        <taxon>Lactobacillales</taxon>
        <taxon>Lactobacillaceae</taxon>
        <taxon>Limosilactobacillus</taxon>
    </lineage>
</organism>
<comment type="function">
    <text evidence="1">Catalyzes the isomerization between 2-isopropylmalate and 3-isopropylmalate, via the formation of 2-isopropylmaleate.</text>
</comment>
<comment type="catalytic activity">
    <reaction evidence="1">
        <text>(2R,3S)-3-isopropylmalate = (2S)-2-isopropylmalate</text>
        <dbReference type="Rhea" id="RHEA:32287"/>
        <dbReference type="ChEBI" id="CHEBI:1178"/>
        <dbReference type="ChEBI" id="CHEBI:35121"/>
        <dbReference type="EC" id="4.2.1.33"/>
    </reaction>
</comment>
<comment type="pathway">
    <text evidence="1">Amino-acid biosynthesis; L-leucine biosynthesis; L-leucine from 3-methyl-2-oxobutanoate: step 2/4.</text>
</comment>
<comment type="subunit">
    <text evidence="1">Heterodimer of LeuC and LeuD.</text>
</comment>
<comment type="similarity">
    <text evidence="1">Belongs to the LeuD family. LeuD type 1 subfamily.</text>
</comment>
<dbReference type="EC" id="4.2.1.33" evidence="1"/>
<dbReference type="EMBL" id="AP008937">
    <property type="protein sequence ID" value="BAG27299.1"/>
    <property type="molecule type" value="Genomic_DNA"/>
</dbReference>
<dbReference type="RefSeq" id="WP_012391251.1">
    <property type="nucleotide sequence ID" value="NC_010610.1"/>
</dbReference>
<dbReference type="SMR" id="B2GCB7"/>
<dbReference type="KEGG" id="lfe:LAF_0963"/>
<dbReference type="eggNOG" id="COG0066">
    <property type="taxonomic scope" value="Bacteria"/>
</dbReference>
<dbReference type="HOGENOM" id="CLU_081378_0_3_9"/>
<dbReference type="UniPathway" id="UPA00048">
    <property type="reaction ID" value="UER00071"/>
</dbReference>
<dbReference type="Proteomes" id="UP000001697">
    <property type="component" value="Chromosome"/>
</dbReference>
<dbReference type="GO" id="GO:0009316">
    <property type="term" value="C:3-isopropylmalate dehydratase complex"/>
    <property type="evidence" value="ECO:0007669"/>
    <property type="project" value="InterPro"/>
</dbReference>
<dbReference type="GO" id="GO:0003861">
    <property type="term" value="F:3-isopropylmalate dehydratase activity"/>
    <property type="evidence" value="ECO:0007669"/>
    <property type="project" value="UniProtKB-UniRule"/>
</dbReference>
<dbReference type="GO" id="GO:0009098">
    <property type="term" value="P:L-leucine biosynthetic process"/>
    <property type="evidence" value="ECO:0007669"/>
    <property type="project" value="UniProtKB-UniRule"/>
</dbReference>
<dbReference type="CDD" id="cd01577">
    <property type="entry name" value="IPMI_Swivel"/>
    <property type="match status" value="1"/>
</dbReference>
<dbReference type="FunFam" id="3.20.19.10:FF:000003">
    <property type="entry name" value="3-isopropylmalate dehydratase small subunit"/>
    <property type="match status" value="1"/>
</dbReference>
<dbReference type="Gene3D" id="3.20.19.10">
    <property type="entry name" value="Aconitase, domain 4"/>
    <property type="match status" value="1"/>
</dbReference>
<dbReference type="HAMAP" id="MF_01031">
    <property type="entry name" value="LeuD_type1"/>
    <property type="match status" value="1"/>
</dbReference>
<dbReference type="InterPro" id="IPR004431">
    <property type="entry name" value="3-IsopropMal_deHydase_ssu"/>
</dbReference>
<dbReference type="InterPro" id="IPR015928">
    <property type="entry name" value="Aconitase/3IPM_dehydase_swvl"/>
</dbReference>
<dbReference type="InterPro" id="IPR000573">
    <property type="entry name" value="AconitaseA/IPMdHydase_ssu_swvl"/>
</dbReference>
<dbReference type="InterPro" id="IPR033940">
    <property type="entry name" value="IPMI_Swivel"/>
</dbReference>
<dbReference type="InterPro" id="IPR050075">
    <property type="entry name" value="LeuD"/>
</dbReference>
<dbReference type="NCBIfam" id="TIGR00171">
    <property type="entry name" value="leuD"/>
    <property type="match status" value="1"/>
</dbReference>
<dbReference type="NCBIfam" id="NF002458">
    <property type="entry name" value="PRK01641.1"/>
    <property type="match status" value="1"/>
</dbReference>
<dbReference type="PANTHER" id="PTHR43345:SF5">
    <property type="entry name" value="3-ISOPROPYLMALATE DEHYDRATASE SMALL SUBUNIT"/>
    <property type="match status" value="1"/>
</dbReference>
<dbReference type="PANTHER" id="PTHR43345">
    <property type="entry name" value="3-ISOPROPYLMALATE DEHYDRATASE SMALL SUBUNIT 2-RELATED-RELATED"/>
    <property type="match status" value="1"/>
</dbReference>
<dbReference type="Pfam" id="PF00694">
    <property type="entry name" value="Aconitase_C"/>
    <property type="match status" value="1"/>
</dbReference>
<dbReference type="SUPFAM" id="SSF52016">
    <property type="entry name" value="LeuD/IlvD-like"/>
    <property type="match status" value="1"/>
</dbReference>
<reference key="1">
    <citation type="journal article" date="2008" name="DNA Res.">
        <title>Comparative genome analysis of Lactobacillus reuteri and Lactobacillus fermentum reveal a genomic island for reuterin and cobalamin production.</title>
        <authorList>
            <person name="Morita H."/>
            <person name="Toh H."/>
            <person name="Fukuda S."/>
            <person name="Horikawa H."/>
            <person name="Oshima K."/>
            <person name="Suzuki T."/>
            <person name="Murakami M."/>
            <person name="Hisamatsu S."/>
            <person name="Kato Y."/>
            <person name="Takizawa T."/>
            <person name="Fukuoka H."/>
            <person name="Yoshimura T."/>
            <person name="Itoh K."/>
            <person name="O'Sullivan D.J."/>
            <person name="McKay L.L."/>
            <person name="Ohno H."/>
            <person name="Kikuchi J."/>
            <person name="Masaoka T."/>
            <person name="Hattori M."/>
        </authorList>
    </citation>
    <scope>NUCLEOTIDE SEQUENCE [LARGE SCALE GENOMIC DNA]</scope>
    <source>
        <strain>NBRC 3956 / LMG 18251</strain>
    </source>
</reference>
<sequence>MDKFTVHTGTTLAIMNDNIDTDQLLPKQFLKRLTKKGYEDALFFEWRYKEDGSNNPDFILNDPERQDASILITGDSFGIGSSREHAVWALRDWGFKAVIAGSFGPILYMNCTKNGVLPIELPKEARETLSKLTPTEQVTIDLPKQEVICGEHSWHFDINSSWKEKFLTGEDDIDQTMRYKDQISAYEVQISPYQ</sequence>
<protein>
    <recommendedName>
        <fullName evidence="1">3-isopropylmalate dehydratase small subunit</fullName>
        <ecNumber evidence="1">4.2.1.33</ecNumber>
    </recommendedName>
    <alternativeName>
        <fullName evidence="1">Alpha-IPM isomerase</fullName>
        <shortName evidence="1">IPMI</shortName>
    </alternativeName>
    <alternativeName>
        <fullName evidence="1">Isopropylmalate isomerase</fullName>
    </alternativeName>
</protein>
<keyword id="KW-0028">Amino-acid biosynthesis</keyword>
<keyword id="KW-0100">Branched-chain amino acid biosynthesis</keyword>
<keyword id="KW-0432">Leucine biosynthesis</keyword>
<keyword id="KW-0456">Lyase</keyword>
<keyword id="KW-1185">Reference proteome</keyword>
<evidence type="ECO:0000255" key="1">
    <source>
        <dbReference type="HAMAP-Rule" id="MF_01031"/>
    </source>
</evidence>
<proteinExistence type="inferred from homology"/>